<accession>C1H3X3</accession>
<name>AMPP2_PARBA</name>
<organism>
    <name type="scientific">Paracoccidioides lutzii (strain ATCC MYA-826 / Pb01)</name>
    <name type="common">Paracoccidioides brasiliensis</name>
    <dbReference type="NCBI Taxonomy" id="502779"/>
    <lineage>
        <taxon>Eukaryota</taxon>
        <taxon>Fungi</taxon>
        <taxon>Dikarya</taxon>
        <taxon>Ascomycota</taxon>
        <taxon>Pezizomycotina</taxon>
        <taxon>Eurotiomycetes</taxon>
        <taxon>Eurotiomycetidae</taxon>
        <taxon>Onygenales</taxon>
        <taxon>Ajellomycetaceae</taxon>
        <taxon>Paracoccidioides</taxon>
    </lineage>
</organism>
<gene>
    <name type="ORF">PAAG_05466</name>
</gene>
<protein>
    <recommendedName>
        <fullName>Probable Xaa-Pro aminopeptidase PAAG_05466</fullName>
        <ecNumber>3.4.11.9</ecNumber>
    </recommendedName>
    <alternativeName>
        <fullName>Aminoacylproline aminopeptidase</fullName>
    </alternativeName>
    <alternativeName>
        <fullName>Prolidase</fullName>
    </alternativeName>
</protein>
<comment type="function">
    <text evidence="1">Catalyzes the removal of a penultimate prolyl residue from the N-termini of peptides.</text>
</comment>
<comment type="catalytic activity">
    <reaction>
        <text>Release of any N-terminal amino acid, including proline, that is linked to proline, even from a dipeptide or tripeptide.</text>
        <dbReference type="EC" id="3.4.11.9"/>
    </reaction>
</comment>
<comment type="cofactor">
    <cofactor evidence="1">
        <name>Mn(2+)</name>
        <dbReference type="ChEBI" id="CHEBI:29035"/>
    </cofactor>
    <text evidence="1">Binds 2 manganese ions per subunit.</text>
</comment>
<comment type="similarity">
    <text evidence="2">Belongs to the peptidase M24B family.</text>
</comment>
<keyword id="KW-0031">Aminopeptidase</keyword>
<keyword id="KW-0378">Hydrolase</keyword>
<keyword id="KW-0464">Manganese</keyword>
<keyword id="KW-0479">Metal-binding</keyword>
<keyword id="KW-0482">Metalloprotease</keyword>
<keyword id="KW-0645">Protease</keyword>
<keyword id="KW-1185">Reference proteome</keyword>
<dbReference type="EC" id="3.4.11.9"/>
<dbReference type="EMBL" id="KN294005">
    <property type="protein sequence ID" value="EEH34417.2"/>
    <property type="molecule type" value="Genomic_DNA"/>
</dbReference>
<dbReference type="RefSeq" id="XP_015699808.1">
    <property type="nucleotide sequence ID" value="XM_015845582.1"/>
</dbReference>
<dbReference type="SMR" id="C1H3X3"/>
<dbReference type="STRING" id="502779.C1H3X3"/>
<dbReference type="GeneID" id="9095864"/>
<dbReference type="KEGG" id="pbl:PAAG_05466"/>
<dbReference type="VEuPathDB" id="FungiDB:PAAG_05466"/>
<dbReference type="eggNOG" id="KOG2737">
    <property type="taxonomic scope" value="Eukaryota"/>
</dbReference>
<dbReference type="HOGENOM" id="CLU_017266_1_2_1"/>
<dbReference type="OMA" id="YELRMIR"/>
<dbReference type="OrthoDB" id="10261878at2759"/>
<dbReference type="Proteomes" id="UP000002059">
    <property type="component" value="Partially assembled WGS sequence"/>
</dbReference>
<dbReference type="GO" id="GO:0030145">
    <property type="term" value="F:manganese ion binding"/>
    <property type="evidence" value="ECO:0007669"/>
    <property type="project" value="InterPro"/>
</dbReference>
<dbReference type="GO" id="GO:0070006">
    <property type="term" value="F:metalloaminopeptidase activity"/>
    <property type="evidence" value="ECO:0007669"/>
    <property type="project" value="InterPro"/>
</dbReference>
<dbReference type="GO" id="GO:0006508">
    <property type="term" value="P:proteolysis"/>
    <property type="evidence" value="ECO:0007669"/>
    <property type="project" value="UniProtKB-KW"/>
</dbReference>
<dbReference type="CDD" id="cd01087">
    <property type="entry name" value="Prolidase"/>
    <property type="match status" value="1"/>
</dbReference>
<dbReference type="Gene3D" id="3.90.230.10">
    <property type="entry name" value="Creatinase/methionine aminopeptidase superfamily"/>
    <property type="match status" value="1"/>
</dbReference>
<dbReference type="Gene3D" id="3.40.350.10">
    <property type="entry name" value="Creatinase/prolidase N-terminal domain"/>
    <property type="match status" value="1"/>
</dbReference>
<dbReference type="InterPro" id="IPR007865">
    <property type="entry name" value="Aminopep_P_N"/>
</dbReference>
<dbReference type="InterPro" id="IPR029149">
    <property type="entry name" value="Creatin/AminoP/Spt16_N"/>
</dbReference>
<dbReference type="InterPro" id="IPR036005">
    <property type="entry name" value="Creatinase/aminopeptidase-like"/>
</dbReference>
<dbReference type="InterPro" id="IPR000994">
    <property type="entry name" value="Pept_M24"/>
</dbReference>
<dbReference type="InterPro" id="IPR001131">
    <property type="entry name" value="Peptidase_M24B_aminopep-P_CS"/>
</dbReference>
<dbReference type="InterPro" id="IPR052433">
    <property type="entry name" value="X-Pro_dipept-like"/>
</dbReference>
<dbReference type="PANTHER" id="PTHR43226">
    <property type="entry name" value="XAA-PRO AMINOPEPTIDASE 3"/>
    <property type="match status" value="1"/>
</dbReference>
<dbReference type="PANTHER" id="PTHR43226:SF3">
    <property type="entry name" value="XAA-PRO AMINOPEPTIDASE AN0832-RELATED"/>
    <property type="match status" value="1"/>
</dbReference>
<dbReference type="Pfam" id="PF05195">
    <property type="entry name" value="AMP_N"/>
    <property type="match status" value="1"/>
</dbReference>
<dbReference type="Pfam" id="PF00557">
    <property type="entry name" value="Peptidase_M24"/>
    <property type="match status" value="1"/>
</dbReference>
<dbReference type="SMART" id="SM01011">
    <property type="entry name" value="AMP_N"/>
    <property type="match status" value="1"/>
</dbReference>
<dbReference type="SUPFAM" id="SSF55920">
    <property type="entry name" value="Creatinase/aminopeptidase"/>
    <property type="match status" value="1"/>
</dbReference>
<dbReference type="SUPFAM" id="SSF53092">
    <property type="entry name" value="Creatinase/prolidase N-terminal domain"/>
    <property type="match status" value="1"/>
</dbReference>
<dbReference type="PROSITE" id="PS00491">
    <property type="entry name" value="PROLINE_PEPTIDASE"/>
    <property type="match status" value="1"/>
</dbReference>
<proteinExistence type="inferred from homology"/>
<reference key="1">
    <citation type="journal article" date="2011" name="PLoS Genet.">
        <title>Comparative genomic analysis of human fungal pathogens causing paracoccidioidomycosis.</title>
        <authorList>
            <person name="Desjardins C.A."/>
            <person name="Champion M.D."/>
            <person name="Holder J.W."/>
            <person name="Muszewska A."/>
            <person name="Goldberg J."/>
            <person name="Bailao A.M."/>
            <person name="Brigido M.M."/>
            <person name="Ferreira M.E."/>
            <person name="Garcia A.M."/>
            <person name="Grynberg M."/>
            <person name="Gujja S."/>
            <person name="Heiman D.I."/>
            <person name="Henn M.R."/>
            <person name="Kodira C.D."/>
            <person name="Leon-Narvaez H."/>
            <person name="Longo L.V.G."/>
            <person name="Ma L.-J."/>
            <person name="Malavazi I."/>
            <person name="Matsuo A.L."/>
            <person name="Morais F.V."/>
            <person name="Pereira M."/>
            <person name="Rodriguez-Brito S."/>
            <person name="Sakthikumar S."/>
            <person name="Salem-Izacc S.M."/>
            <person name="Sykes S.M."/>
            <person name="Teixeira M.M."/>
            <person name="Vallejo M.C."/>
            <person name="Walter M.E."/>
            <person name="Yandava C."/>
            <person name="Young S."/>
            <person name="Zeng Q."/>
            <person name="Zucker J."/>
            <person name="Felipe M.S."/>
            <person name="Goldman G.H."/>
            <person name="Haas B.J."/>
            <person name="McEwen J.G."/>
            <person name="Nino-Vega G."/>
            <person name="Puccia R."/>
            <person name="San-Blas G."/>
            <person name="Soares C.M."/>
            <person name="Birren B.W."/>
            <person name="Cuomo C.A."/>
        </authorList>
    </citation>
    <scope>NUCLEOTIDE SEQUENCE [LARGE SCALE GENOMIC DNA]</scope>
    <source>
        <strain>ATCC MYA-826 / Pb01</strain>
    </source>
</reference>
<sequence>MGTYPAFSGSLQLPEQRLHGTSNLHPAGGYRIELQVQDATFDKYPAKQHAQRVAAKLKKEKGLIFLMGQKAALLEDSDQETRFRQRRYFFYMSGVNEADCDLTYDIQSDKLTLYVPNFDLRREIWMGPTLGPEEALKRFDIDEAKYQSFLEGDIKQWASCSGHGSTIYILHGSQKPTGDFPNVLMDSETLKPAMNACRVVKDEHEIELMRHANRVSSAAHIAVLQGIRKMTNEAQIEGSFLNTCVSLGAHNQAYGIIAASGANAATLHYSKNNEPLKGRQFVCLDAGAEWDCYASDVTRTFPTAARWPGTEAEQIYALVQNMQESCILRIKEGVRYLDLHYLAHDILIHGFLAIGIFKAGRAEEIKKSGASSLFFPHGLGHHIGLEVHDVSPDSLFAQDNDRTTDSWLFSSTYLSPCTASSPTLKSGMVVTVEPGIYFSQIALDNAKSEQLKHIDMDVVKRYMAVGGVRIEDDILVTKDGFENLTLAPKGQAMLDYIQQGNGSCNI</sequence>
<evidence type="ECO:0000250" key="1"/>
<evidence type="ECO:0000305" key="2"/>
<feature type="chain" id="PRO_0000411842" description="Probable Xaa-Pro aminopeptidase PAAG_05466">
    <location>
        <begin position="1"/>
        <end position="506"/>
    </location>
</feature>
<feature type="binding site" evidence="1">
    <location>
        <position position="285"/>
    </location>
    <ligand>
        <name>Mn(2+)</name>
        <dbReference type="ChEBI" id="CHEBI:29035"/>
        <label>2</label>
    </ligand>
</feature>
<feature type="binding site" evidence="1">
    <location>
        <position position="296"/>
    </location>
    <ligand>
        <name>Mn(2+)</name>
        <dbReference type="ChEBI" id="CHEBI:29035"/>
        <label>1</label>
    </ligand>
</feature>
<feature type="binding site" evidence="1">
    <location>
        <position position="296"/>
    </location>
    <ligand>
        <name>Mn(2+)</name>
        <dbReference type="ChEBI" id="CHEBI:29035"/>
        <label>2</label>
    </ligand>
</feature>
<feature type="binding site" evidence="1">
    <location>
        <position position="433"/>
    </location>
    <ligand>
        <name>Mn(2+)</name>
        <dbReference type="ChEBI" id="CHEBI:29035"/>
        <label>1</label>
    </ligand>
</feature>
<feature type="binding site" evidence="1">
    <location>
        <position position="471"/>
    </location>
    <ligand>
        <name>Mn(2+)</name>
        <dbReference type="ChEBI" id="CHEBI:29035"/>
        <label>1</label>
    </ligand>
</feature>
<feature type="binding site" evidence="1">
    <location>
        <position position="471"/>
    </location>
    <ligand>
        <name>Mn(2+)</name>
        <dbReference type="ChEBI" id="CHEBI:29035"/>
        <label>2</label>
    </ligand>
</feature>